<proteinExistence type="evidence at protein level"/>
<sequence>MADTPVPIFNLAALREGADQEKFRECVTGMGVFYLTGYGAGDKDHRLATDTAMDFFANGTEAEKAAVTTDVPTMRRGYSALEAESTAQVTRTGSYTDYSMSFSMGISGNVFPSPEFERVWTEYFDKLYAAAQETARLVLTASGGYDAEIVGSLDELLDADPVLRLRYFPEVPEHRSAEHEPRRMAPHYDLSIITFIHQTPCANGFVSLQAEIGGELVSLPVVEDAVVVMCGAMAPLATQGALPAPRHHVRSPGAGMREGSDRTSSVFFLRPTTDFSFSVAKARSYGLAVDLDMETATFGDWIGTNYVTMHAKNEPQAG</sequence>
<keyword id="KW-0045">Antibiotic biosynthesis</keyword>
<keyword id="KW-0903">Direct protein sequencing</keyword>
<keyword id="KW-0408">Iron</keyword>
<keyword id="KW-0560">Oxidoreductase</keyword>
<keyword id="KW-0847">Vitamin C</keyword>
<accession>P42220</accession>
<gene>
    <name type="primary">cefF</name>
</gene>
<name>CEFF_STRCL</name>
<reference key="1">
    <citation type="journal article" date="1991" name="J. Bacteriol.">
        <title>Cloning and sequencing of the beta-lactam hydroxylase gene (cefF) from Streptomyces clavuligerus: gene duplication may have led to separate hydroxylase and expandase activities in the actinomycetes.</title>
        <authorList>
            <person name="Kovacevic S."/>
            <person name="Miller J.R."/>
        </authorList>
    </citation>
    <scope>NUCLEOTIDE SEQUENCE [GENOMIC DNA]</scope>
</reference>
<reference key="2">
    <citation type="journal article" date="1991" name="J. Biol. Chem.">
        <title>Deacetoxycephalosporin C hydroxylase of Streptomyces clavuligerus. Purification, characterization, bifunctionality, and evolutionary implication.</title>
        <authorList>
            <person name="Baker B.J."/>
            <person name="Dotzlaf J.E."/>
            <person name="Yeh W.K."/>
        </authorList>
    </citation>
    <scope>PROTEIN SEQUENCE OF 2-29 AND 92-100</scope>
    <scope>CHARACTERIZATION</scope>
</reference>
<dbReference type="EC" id="1.14.11.26"/>
<dbReference type="EMBL" id="M63809">
    <property type="protein sequence ID" value="AAA26716.1"/>
    <property type="molecule type" value="Genomic_DNA"/>
</dbReference>
<dbReference type="PIR" id="A39204">
    <property type="entry name" value="A39204"/>
</dbReference>
<dbReference type="SMR" id="P42220"/>
<dbReference type="STRING" id="1901.BB341_07760"/>
<dbReference type="KEGG" id="ag:AAA26716"/>
<dbReference type="BioCyc" id="MetaCyc:MONOMER-13408"/>
<dbReference type="BRENDA" id="1.14.11.26">
    <property type="organism ID" value="5988"/>
</dbReference>
<dbReference type="UniPathway" id="UPA00172"/>
<dbReference type="GO" id="GO:0045442">
    <property type="term" value="F:deacetoxycephalosporin-C hydroxylase activity"/>
    <property type="evidence" value="ECO:0007669"/>
    <property type="project" value="UniProtKB-EC"/>
</dbReference>
<dbReference type="GO" id="GO:0031418">
    <property type="term" value="F:L-ascorbic acid binding"/>
    <property type="evidence" value="ECO:0007669"/>
    <property type="project" value="UniProtKB-KW"/>
</dbReference>
<dbReference type="GO" id="GO:0017000">
    <property type="term" value="P:antibiotic biosynthetic process"/>
    <property type="evidence" value="ECO:0007669"/>
    <property type="project" value="UniProtKB-KW"/>
</dbReference>
<dbReference type="Gene3D" id="2.60.120.330">
    <property type="entry name" value="B-lactam Antibiotic, Isopenicillin N Synthase, Chain"/>
    <property type="match status" value="1"/>
</dbReference>
<dbReference type="InterPro" id="IPR044861">
    <property type="entry name" value="IPNS-like_FE2OG_OXY"/>
</dbReference>
<dbReference type="InterPro" id="IPR027443">
    <property type="entry name" value="IPNS-like_sf"/>
</dbReference>
<dbReference type="InterPro" id="IPR050231">
    <property type="entry name" value="Iron_ascorbate_oxido_reductase"/>
</dbReference>
<dbReference type="InterPro" id="IPR005123">
    <property type="entry name" value="Oxoglu/Fe-dep_dioxygenase_dom"/>
</dbReference>
<dbReference type="PANTHER" id="PTHR47990">
    <property type="entry name" value="2-OXOGLUTARATE (2OG) AND FE(II)-DEPENDENT OXYGENASE SUPERFAMILY PROTEIN-RELATED"/>
    <property type="match status" value="1"/>
</dbReference>
<dbReference type="Pfam" id="PF03171">
    <property type="entry name" value="2OG-FeII_Oxy"/>
    <property type="match status" value="1"/>
</dbReference>
<dbReference type="SUPFAM" id="SSF51197">
    <property type="entry name" value="Clavaminate synthase-like"/>
    <property type="match status" value="1"/>
</dbReference>
<dbReference type="PROSITE" id="PS51471">
    <property type="entry name" value="FE2OG_OXY"/>
    <property type="match status" value="1"/>
</dbReference>
<feature type="initiator methionine" description="Removed" evidence="2">
    <location>
        <position position="1"/>
    </location>
</feature>
<feature type="chain" id="PRO_0000219513" description="Deacetoxycephalosporin C hydroxylase">
    <location>
        <begin position="2"/>
        <end position="318"/>
    </location>
</feature>
<feature type="domain" description="Fe2OG dioxygenase" evidence="1">
    <location>
        <begin position="158"/>
        <end position="271"/>
    </location>
</feature>
<evidence type="ECO:0000255" key="1">
    <source>
        <dbReference type="PROSITE-ProRule" id="PRU00805"/>
    </source>
</evidence>
<evidence type="ECO:0000269" key="2">
    <source>
    </source>
</evidence>
<evidence type="ECO:0000305" key="3"/>
<protein>
    <recommendedName>
        <fullName>Deacetoxycephalosporin C hydroxylase</fullName>
        <ecNumber>1.14.11.26</ecNumber>
    </recommendedName>
    <alternativeName>
        <fullName>Beta-lactam hydroxylase</fullName>
    </alternativeName>
    <alternativeName>
        <fullName>Deacetylcephalosporin C synthase</fullName>
        <shortName>DACS</shortName>
    </alternativeName>
</protein>
<organism>
    <name type="scientific">Streptomyces clavuligerus</name>
    <dbReference type="NCBI Taxonomy" id="1901"/>
    <lineage>
        <taxon>Bacteria</taxon>
        <taxon>Bacillati</taxon>
        <taxon>Actinomycetota</taxon>
        <taxon>Actinomycetes</taxon>
        <taxon>Kitasatosporales</taxon>
        <taxon>Streptomycetaceae</taxon>
        <taxon>Streptomyces</taxon>
    </lineage>
</organism>
<comment type="function">
    <text>Hydroxylation of desacetoxicephalosporin C in 3'position to form deacetylcephalosporin C.</text>
</comment>
<comment type="catalytic activity">
    <reaction>
        <text>deacetoxycephalosporin C + 2-oxoglutarate + O2 = deacetylcephalosporin C + succinate + CO2</text>
        <dbReference type="Rhea" id="RHEA:16805"/>
        <dbReference type="ChEBI" id="CHEBI:15379"/>
        <dbReference type="ChEBI" id="CHEBI:16526"/>
        <dbReference type="ChEBI" id="CHEBI:16810"/>
        <dbReference type="ChEBI" id="CHEBI:30031"/>
        <dbReference type="ChEBI" id="CHEBI:58366"/>
        <dbReference type="ChEBI" id="CHEBI:58415"/>
        <dbReference type="EC" id="1.14.11.26"/>
    </reaction>
</comment>
<comment type="cofactor">
    <cofactor>
        <name>Fe cation</name>
        <dbReference type="ChEBI" id="CHEBI:24875"/>
    </cofactor>
</comment>
<comment type="pathway">
    <text>Antibiotic biosynthesis; cephalosporin C biosynthesis.</text>
</comment>
<comment type="subunit">
    <text>Monomer.</text>
</comment>
<comment type="similarity">
    <text evidence="3">Belongs to the iron/ascorbate-dependent oxidoreductase family.</text>
</comment>